<name>RS13_BUCAP</name>
<keyword id="KW-0687">Ribonucleoprotein</keyword>
<keyword id="KW-0689">Ribosomal protein</keyword>
<keyword id="KW-0694">RNA-binding</keyword>
<keyword id="KW-0699">rRNA-binding</keyword>
<keyword id="KW-0820">tRNA-binding</keyword>
<reference key="1">
    <citation type="journal article" date="2002" name="Science">
        <title>50 million years of genomic stasis in endosymbiotic bacteria.</title>
        <authorList>
            <person name="Tamas I."/>
            <person name="Klasson L."/>
            <person name="Canbaeck B."/>
            <person name="Naeslund A.K."/>
            <person name="Eriksson A.-S."/>
            <person name="Wernegreen J.J."/>
            <person name="Sandstroem J.P."/>
            <person name="Moran N.A."/>
            <person name="Andersson S.G.E."/>
        </authorList>
    </citation>
    <scope>NUCLEOTIDE SEQUENCE [LARGE SCALE GENOMIC DNA]</scope>
    <source>
        <strain>Sg</strain>
    </source>
</reference>
<gene>
    <name evidence="1" type="primary">rpsM</name>
    <name type="ordered locus">BUsg_483</name>
</gene>
<organism>
    <name type="scientific">Buchnera aphidicola subsp. Schizaphis graminum (strain Sg)</name>
    <dbReference type="NCBI Taxonomy" id="198804"/>
    <lineage>
        <taxon>Bacteria</taxon>
        <taxon>Pseudomonadati</taxon>
        <taxon>Pseudomonadota</taxon>
        <taxon>Gammaproteobacteria</taxon>
        <taxon>Enterobacterales</taxon>
        <taxon>Erwiniaceae</taxon>
        <taxon>Buchnera</taxon>
    </lineage>
</organism>
<proteinExistence type="inferred from homology"/>
<comment type="function">
    <text evidence="1">Located at the top of the head of the 30S subunit, it contacts several helices of the 16S rRNA. In the 70S ribosome it contacts the 23S rRNA (bridge B1a) and protein L5 of the 50S subunit (bridge B1b), connecting the 2 subunits; these bridges are implicated in subunit movement. Contacts the tRNAs in the A and P-sites.</text>
</comment>
<comment type="subunit">
    <text evidence="1">Part of the 30S ribosomal subunit. Forms a loose heterodimer with protein S19. Forms two bridges to the 50S subunit in the 70S ribosome.</text>
</comment>
<comment type="similarity">
    <text evidence="1">Belongs to the universal ribosomal protein uS13 family.</text>
</comment>
<sequence length="118" mass="13535">MARIAGINIPEHKHALIALTSIYGIGKKRSKIICFNANIAENSKISDLKEEEIELLRENVAKYVTEGDLRREKTLNIKRLIDLNCYRGLRHRRSLPVRGQRTKTNARTCKGPRKAIKK</sequence>
<dbReference type="EMBL" id="AE013218">
    <property type="protein sequence ID" value="AAM68026.1"/>
    <property type="molecule type" value="Genomic_DNA"/>
</dbReference>
<dbReference type="RefSeq" id="WP_011053992.1">
    <property type="nucleotide sequence ID" value="NC_004061.1"/>
</dbReference>
<dbReference type="SMR" id="Q8K971"/>
<dbReference type="STRING" id="198804.BUsg_483"/>
<dbReference type="GeneID" id="93003958"/>
<dbReference type="KEGG" id="bas:BUsg_483"/>
<dbReference type="eggNOG" id="COG0099">
    <property type="taxonomic scope" value="Bacteria"/>
</dbReference>
<dbReference type="HOGENOM" id="CLU_103849_1_2_6"/>
<dbReference type="Proteomes" id="UP000000416">
    <property type="component" value="Chromosome"/>
</dbReference>
<dbReference type="GO" id="GO:0005829">
    <property type="term" value="C:cytosol"/>
    <property type="evidence" value="ECO:0007669"/>
    <property type="project" value="TreeGrafter"/>
</dbReference>
<dbReference type="GO" id="GO:0015935">
    <property type="term" value="C:small ribosomal subunit"/>
    <property type="evidence" value="ECO:0007669"/>
    <property type="project" value="TreeGrafter"/>
</dbReference>
<dbReference type="GO" id="GO:0019843">
    <property type="term" value="F:rRNA binding"/>
    <property type="evidence" value="ECO:0007669"/>
    <property type="project" value="UniProtKB-UniRule"/>
</dbReference>
<dbReference type="GO" id="GO:0003735">
    <property type="term" value="F:structural constituent of ribosome"/>
    <property type="evidence" value="ECO:0007669"/>
    <property type="project" value="InterPro"/>
</dbReference>
<dbReference type="GO" id="GO:0000049">
    <property type="term" value="F:tRNA binding"/>
    <property type="evidence" value="ECO:0007669"/>
    <property type="project" value="UniProtKB-UniRule"/>
</dbReference>
<dbReference type="GO" id="GO:0006412">
    <property type="term" value="P:translation"/>
    <property type="evidence" value="ECO:0007669"/>
    <property type="project" value="UniProtKB-UniRule"/>
</dbReference>
<dbReference type="FunFam" id="1.10.8.50:FF:000001">
    <property type="entry name" value="30S ribosomal protein S13"/>
    <property type="match status" value="1"/>
</dbReference>
<dbReference type="FunFam" id="4.10.910.10:FF:000001">
    <property type="entry name" value="30S ribosomal protein S13"/>
    <property type="match status" value="1"/>
</dbReference>
<dbReference type="Gene3D" id="1.10.8.50">
    <property type="match status" value="1"/>
</dbReference>
<dbReference type="Gene3D" id="4.10.910.10">
    <property type="entry name" value="30s ribosomal protein s13, domain 2"/>
    <property type="match status" value="1"/>
</dbReference>
<dbReference type="HAMAP" id="MF_01315">
    <property type="entry name" value="Ribosomal_uS13"/>
    <property type="match status" value="1"/>
</dbReference>
<dbReference type="InterPro" id="IPR027437">
    <property type="entry name" value="Rbsml_uS13_C"/>
</dbReference>
<dbReference type="InterPro" id="IPR001892">
    <property type="entry name" value="Ribosomal_uS13"/>
</dbReference>
<dbReference type="InterPro" id="IPR010979">
    <property type="entry name" value="Ribosomal_uS13-like_H2TH"/>
</dbReference>
<dbReference type="InterPro" id="IPR019980">
    <property type="entry name" value="Ribosomal_uS13_bac-type"/>
</dbReference>
<dbReference type="InterPro" id="IPR018269">
    <property type="entry name" value="Ribosomal_uS13_CS"/>
</dbReference>
<dbReference type="NCBIfam" id="TIGR03631">
    <property type="entry name" value="uS13_bact"/>
    <property type="match status" value="1"/>
</dbReference>
<dbReference type="PANTHER" id="PTHR10871">
    <property type="entry name" value="30S RIBOSOMAL PROTEIN S13/40S RIBOSOMAL PROTEIN S18"/>
    <property type="match status" value="1"/>
</dbReference>
<dbReference type="PANTHER" id="PTHR10871:SF1">
    <property type="entry name" value="SMALL RIBOSOMAL SUBUNIT PROTEIN US13M"/>
    <property type="match status" value="1"/>
</dbReference>
<dbReference type="Pfam" id="PF00416">
    <property type="entry name" value="Ribosomal_S13"/>
    <property type="match status" value="1"/>
</dbReference>
<dbReference type="PIRSF" id="PIRSF002134">
    <property type="entry name" value="Ribosomal_S13"/>
    <property type="match status" value="1"/>
</dbReference>
<dbReference type="SUPFAM" id="SSF46946">
    <property type="entry name" value="S13-like H2TH domain"/>
    <property type="match status" value="1"/>
</dbReference>
<dbReference type="PROSITE" id="PS00646">
    <property type="entry name" value="RIBOSOMAL_S13_1"/>
    <property type="match status" value="1"/>
</dbReference>
<dbReference type="PROSITE" id="PS50159">
    <property type="entry name" value="RIBOSOMAL_S13_2"/>
    <property type="match status" value="1"/>
</dbReference>
<evidence type="ECO:0000255" key="1">
    <source>
        <dbReference type="HAMAP-Rule" id="MF_01315"/>
    </source>
</evidence>
<evidence type="ECO:0000256" key="2">
    <source>
        <dbReference type="SAM" id="MobiDB-lite"/>
    </source>
</evidence>
<evidence type="ECO:0000305" key="3"/>
<feature type="chain" id="PRO_0000132073" description="Small ribosomal subunit protein uS13">
    <location>
        <begin position="1"/>
        <end position="118"/>
    </location>
</feature>
<feature type="region of interest" description="Disordered" evidence="2">
    <location>
        <begin position="97"/>
        <end position="118"/>
    </location>
</feature>
<protein>
    <recommendedName>
        <fullName evidence="1">Small ribosomal subunit protein uS13</fullName>
    </recommendedName>
    <alternativeName>
        <fullName evidence="3">30S ribosomal protein S13</fullName>
    </alternativeName>
</protein>
<accession>Q8K971</accession>